<feature type="chain" id="PRO_0000069599" description="G protein-coupled receptor 88">
    <location>
        <begin position="1"/>
        <end position="384"/>
    </location>
</feature>
<feature type="topological domain" description="Extracellular" evidence="3">
    <location>
        <begin position="1"/>
        <end position="35"/>
    </location>
</feature>
<feature type="transmembrane region" description="Helical; Name=1" evidence="3">
    <location>
        <begin position="36"/>
        <end position="56"/>
    </location>
</feature>
<feature type="topological domain" description="Cytoplasmic" evidence="3">
    <location>
        <begin position="57"/>
        <end position="73"/>
    </location>
</feature>
<feature type="transmembrane region" description="Helical; Name=2" evidence="3">
    <location>
        <begin position="74"/>
        <end position="94"/>
    </location>
</feature>
<feature type="topological domain" description="Extracellular" evidence="3">
    <location>
        <begin position="95"/>
        <end position="116"/>
    </location>
</feature>
<feature type="transmembrane region" description="Helical; Name=3" evidence="3">
    <location>
        <begin position="117"/>
        <end position="136"/>
    </location>
</feature>
<feature type="topological domain" description="Cytoplasmic" evidence="3">
    <location>
        <begin position="137"/>
        <end position="158"/>
    </location>
</feature>
<feature type="transmembrane region" description="Helical; Name=4" evidence="3">
    <location>
        <begin position="159"/>
        <end position="179"/>
    </location>
</feature>
<feature type="topological domain" description="Extracellular" evidence="3">
    <location>
        <begin position="180"/>
        <end position="195"/>
    </location>
</feature>
<feature type="transmembrane region" description="Helical; Name=5" evidence="3">
    <location>
        <begin position="196"/>
        <end position="216"/>
    </location>
</feature>
<feature type="topological domain" description="Cytoplasmic" evidence="3">
    <location>
        <begin position="217"/>
        <end position="285"/>
    </location>
</feature>
<feature type="transmembrane region" description="Helical; Name=6" evidence="3">
    <location>
        <begin position="286"/>
        <end position="306"/>
    </location>
</feature>
<feature type="topological domain" description="Extracellular" evidence="3">
    <location>
        <begin position="307"/>
        <end position="310"/>
    </location>
</feature>
<feature type="transmembrane region" description="Helical; Name=7" evidence="3">
    <location>
        <begin position="311"/>
        <end position="331"/>
    </location>
</feature>
<feature type="topological domain" description="Cytoplasmic" evidence="3">
    <location>
        <begin position="332"/>
        <end position="384"/>
    </location>
</feature>
<feature type="glycosylation site" description="N-linked (GlcNAc...) asparagine" evidence="3">
    <location>
        <position position="3"/>
    </location>
</feature>
<sequence length="384" mass="40200">MTNSSSTSTSTTTGGSLLLLCEEEESWAGRRIPVSLLYSGLAIGGTLANGMVIYLVSSFRKLQTTSNAFIVNGCAADLSVCALWMPQEAVLGLLPAGSAEPPGDWDSGGGSYRLLRGGLLGLGLTVSLLSHCLVALNRYLLITRAPATYQVLYQRRHTAGMLALSWALALGLVLLLPPWAPKPGAEPPQVHYPALLAAGALLAQTALLLHCYLGIVRRVRVSVKRVSVLNFHLLHQLPGCAAAAAAFPAAPHAPGAGGAAHPAQPQPLPAALQPRRAQRRLSGLSVLLLCCVFLLATQPLVWVSLASGFSLPVPWGVQAASWLLCCALSALNPLLYTWRNEEFRRSVRSVLPGVGDAAAAAAAATAVPAMSQAQLGTRAAGQHW</sequence>
<protein>
    <recommendedName>
        <fullName evidence="8">G protein-coupled receptor 88</fullName>
    </recommendedName>
    <alternativeName>
        <fullName>Striatum-specific G-protein coupled receptor</fullName>
    </alternativeName>
</protein>
<comment type="function">
    <text evidence="1 2 6">Orphan G protein-coupled receptor implicated in a large repertoire of behavioral responses that engage motor activities, spatial learning, and emotional processing (PubMed:25155879). May play a role in the regulation of cognitive and motor function (By similarity). Couples with the heterotrimeric G protein complex of the G(i) subfamily, consisting of GNAI1, GNB1 and GNG2, thereby acting through a G(i)-mediated pathway (By similarity). Plays a role in the attenuation of D1 dopamine receptor (D1R)-mediated cAMP response in ciliated cells (By similarity). In non-ciliated cells, involved in the inhibition of the beta-2 adrenergic receptor (B2AR) response (By similarity).</text>
</comment>
<comment type="subcellular location">
    <subcellularLocation>
        <location evidence="7">Cell membrane</location>
        <topology evidence="3">Multi-pass membrane protein</topology>
    </subcellularLocation>
    <subcellularLocation>
        <location evidence="2">Cell projection</location>
        <location evidence="2">Cilium membrane</location>
        <topology evidence="3">Multi-pass membrane protein</topology>
    </subcellularLocation>
    <subcellularLocation>
        <location evidence="7">Cytoplasm</location>
    </subcellularLocation>
    <subcellularLocation>
        <location evidence="7">Nucleus</location>
    </subcellularLocation>
    <text evidence="2 7">Localized to cilia in ciliated cells; whereas in non-ciliated cells, distributed throughout the cell membrane (By similarity). During cortical lamination, subcellular location shifts, on the day of birth, from expression at the plasma membrane and in the cytoplasm to the nuclei of neurons. This intranuclear localization remains throughout adulthood.</text>
</comment>
<comment type="tissue specificity">
    <text evidence="5 7">Expressed predominantly in the striatum (PubMed:11056049). Expressed also in olfactory tubercle, nucleus accumbens, amygdala, and neocortex. Spinal cord, pons, and medulla expression remains discrete (PubMed:26918661). Also expressed in peripheral tissues, including adrenal cortex (16 dpc to 21 dpc) and cochlear ganglia (19 dpc to P3) and also at moderate levels in retina (18 dpc to 19 dpc) and spleen (21 dpc to P7) (PubMed:26918661).</text>
</comment>
<comment type="developmental stage">
    <text evidence="7">Detected at embryonic day 16 (16 dpc) in the striatum. From 16 dpc to 20 dpc to adulthood, the highest expression levels of protein is observed in the striatum, olfactory tubercle, nucleus accumbens, amygdala, and neocortex.</text>
</comment>
<comment type="similarity">
    <text evidence="4">Belongs to the G-protein coupled receptor 1 family.</text>
</comment>
<name>GPR88_RAT</name>
<organism>
    <name type="scientific">Rattus norvegicus</name>
    <name type="common">Rat</name>
    <dbReference type="NCBI Taxonomy" id="10116"/>
    <lineage>
        <taxon>Eukaryota</taxon>
        <taxon>Metazoa</taxon>
        <taxon>Chordata</taxon>
        <taxon>Craniata</taxon>
        <taxon>Vertebrata</taxon>
        <taxon>Euteleostomi</taxon>
        <taxon>Mammalia</taxon>
        <taxon>Eutheria</taxon>
        <taxon>Euarchontoglires</taxon>
        <taxon>Glires</taxon>
        <taxon>Rodentia</taxon>
        <taxon>Myomorpha</taxon>
        <taxon>Muroidea</taxon>
        <taxon>Muridae</taxon>
        <taxon>Murinae</taxon>
        <taxon>Rattus</taxon>
    </lineage>
</organism>
<keyword id="KW-1003">Cell membrane</keyword>
<keyword id="KW-0966">Cell projection</keyword>
<keyword id="KW-0963">Cytoplasm</keyword>
<keyword id="KW-0297">G-protein coupled receptor</keyword>
<keyword id="KW-0325">Glycoprotein</keyword>
<keyword id="KW-0472">Membrane</keyword>
<keyword id="KW-0539">Nucleus</keyword>
<keyword id="KW-0675">Receptor</keyword>
<keyword id="KW-1185">Reference proteome</keyword>
<keyword id="KW-0807">Transducer</keyword>
<keyword id="KW-0812">Transmembrane</keyword>
<keyword id="KW-1133">Transmembrane helix</keyword>
<proteinExistence type="evidence at transcript level"/>
<gene>
    <name type="primary">Gpr88</name>
    <name type="synonym">Strg</name>
</gene>
<evidence type="ECO:0000250" key="1">
    <source>
        <dbReference type="UniProtKB" id="Q9EPB7"/>
    </source>
</evidence>
<evidence type="ECO:0000250" key="2">
    <source>
        <dbReference type="UniProtKB" id="Q9GZN0"/>
    </source>
</evidence>
<evidence type="ECO:0000255" key="3"/>
<evidence type="ECO:0000255" key="4">
    <source>
        <dbReference type="PROSITE-ProRule" id="PRU00521"/>
    </source>
</evidence>
<evidence type="ECO:0000269" key="5">
    <source>
    </source>
</evidence>
<evidence type="ECO:0000269" key="6">
    <source>
    </source>
</evidence>
<evidence type="ECO:0000269" key="7">
    <source>
    </source>
</evidence>
<evidence type="ECO:0000305" key="8"/>
<dbReference type="EMBL" id="AB042407">
    <property type="protein sequence ID" value="BAB18244.1"/>
    <property type="molecule type" value="mRNA"/>
</dbReference>
<dbReference type="RefSeq" id="NP_113884.1">
    <property type="nucleotide sequence ID" value="NM_031696.2"/>
</dbReference>
<dbReference type="RefSeq" id="XP_006233282.1">
    <property type="nucleotide sequence ID" value="XM_006233220.5"/>
</dbReference>
<dbReference type="RefSeq" id="XP_006233283.1">
    <property type="nucleotide sequence ID" value="XM_006233221.5"/>
</dbReference>
<dbReference type="RefSeq" id="XP_006233284.1">
    <property type="nucleotide sequence ID" value="XM_006233222.5"/>
</dbReference>
<dbReference type="RefSeq" id="XP_038958989.1">
    <property type="nucleotide sequence ID" value="XM_039103061.2"/>
</dbReference>
<dbReference type="RefSeq" id="XP_038958990.1">
    <property type="nucleotide sequence ID" value="XM_039103062.2"/>
</dbReference>
<dbReference type="RefSeq" id="XP_038958991.1">
    <property type="nucleotide sequence ID" value="XM_039103063.2"/>
</dbReference>
<dbReference type="RefSeq" id="XP_038958992.1">
    <property type="nucleotide sequence ID" value="XM_039103064.2"/>
</dbReference>
<dbReference type="SMR" id="Q9ESP4"/>
<dbReference type="FunCoup" id="Q9ESP4">
    <property type="interactions" value="105"/>
</dbReference>
<dbReference type="STRING" id="10116.ENSRNOP00000038233"/>
<dbReference type="GlyCosmos" id="Q9ESP4">
    <property type="glycosylation" value="1 site, No reported glycans"/>
</dbReference>
<dbReference type="GlyGen" id="Q9ESP4">
    <property type="glycosylation" value="1 site"/>
</dbReference>
<dbReference type="PhosphoSitePlus" id="Q9ESP4"/>
<dbReference type="PaxDb" id="10116-ENSRNOP00000038233"/>
<dbReference type="Ensembl" id="ENSRNOT00000037068.4">
    <property type="protein sequence ID" value="ENSRNOP00000038233.2"/>
    <property type="gene ID" value="ENSRNOG00000026953.4"/>
</dbReference>
<dbReference type="GeneID" id="64443"/>
<dbReference type="KEGG" id="rno:64443"/>
<dbReference type="UCSC" id="RGD:61921">
    <property type="organism name" value="rat"/>
</dbReference>
<dbReference type="AGR" id="RGD:61921"/>
<dbReference type="CTD" id="54112"/>
<dbReference type="RGD" id="61921">
    <property type="gene designation" value="Gpr88"/>
</dbReference>
<dbReference type="eggNOG" id="KOG3656">
    <property type="taxonomic scope" value="Eukaryota"/>
</dbReference>
<dbReference type="GeneTree" id="ENSGT00390000009609"/>
<dbReference type="HOGENOM" id="CLU_053532_0_0_1"/>
<dbReference type="InParanoid" id="Q9ESP4"/>
<dbReference type="OMA" id="LLYTWKN"/>
<dbReference type="OrthoDB" id="10039923at2759"/>
<dbReference type="PhylomeDB" id="Q9ESP4"/>
<dbReference type="TreeFam" id="TF336499"/>
<dbReference type="PRO" id="PR:Q9ESP4"/>
<dbReference type="Proteomes" id="UP000002494">
    <property type="component" value="Chromosome 2"/>
</dbReference>
<dbReference type="Bgee" id="ENSRNOG00000026953">
    <property type="expression patterns" value="Expressed in frontal cortex and 17 other cell types or tissues"/>
</dbReference>
<dbReference type="GO" id="GO:0060170">
    <property type="term" value="C:ciliary membrane"/>
    <property type="evidence" value="ECO:0000250"/>
    <property type="project" value="UniProtKB"/>
</dbReference>
<dbReference type="GO" id="GO:0005929">
    <property type="term" value="C:cilium"/>
    <property type="evidence" value="ECO:0000266"/>
    <property type="project" value="RGD"/>
</dbReference>
<dbReference type="GO" id="GO:0005737">
    <property type="term" value="C:cytoplasm"/>
    <property type="evidence" value="ECO:0000314"/>
    <property type="project" value="UniProtKB"/>
</dbReference>
<dbReference type="GO" id="GO:0005634">
    <property type="term" value="C:nucleus"/>
    <property type="evidence" value="ECO:0000314"/>
    <property type="project" value="UniProtKB"/>
</dbReference>
<dbReference type="GO" id="GO:0005886">
    <property type="term" value="C:plasma membrane"/>
    <property type="evidence" value="ECO:0000314"/>
    <property type="project" value="UniProtKB"/>
</dbReference>
<dbReference type="GO" id="GO:0004941">
    <property type="term" value="F:beta2-adrenergic receptor activity"/>
    <property type="evidence" value="ECO:0000250"/>
    <property type="project" value="UniProtKB"/>
</dbReference>
<dbReference type="GO" id="GO:0003774">
    <property type="term" value="F:cytoskeletal motor activity"/>
    <property type="evidence" value="ECO:0000250"/>
    <property type="project" value="UniProtKB"/>
</dbReference>
<dbReference type="GO" id="GO:0008020">
    <property type="term" value="F:G protein-coupled photoreceptor activity"/>
    <property type="evidence" value="ECO:0000318"/>
    <property type="project" value="GO_Central"/>
</dbReference>
<dbReference type="GO" id="GO:0007188">
    <property type="term" value="P:adenylate cyclase-modulating G protein-coupled receptor signaling pathway"/>
    <property type="evidence" value="ECO:0000250"/>
    <property type="project" value="UniProtKB"/>
</dbReference>
<dbReference type="GO" id="GO:0071482">
    <property type="term" value="P:cellular response to light stimulus"/>
    <property type="evidence" value="ECO:0000318"/>
    <property type="project" value="GO_Central"/>
</dbReference>
<dbReference type="GO" id="GO:0007186">
    <property type="term" value="P:G protein-coupled receptor signaling pathway"/>
    <property type="evidence" value="ECO:0000250"/>
    <property type="project" value="UniProtKB"/>
</dbReference>
<dbReference type="GO" id="GO:0007626">
    <property type="term" value="P:locomotory behavior"/>
    <property type="evidence" value="ECO:0000266"/>
    <property type="project" value="RGD"/>
</dbReference>
<dbReference type="GO" id="GO:0061743">
    <property type="term" value="P:motor learning"/>
    <property type="evidence" value="ECO:0000250"/>
    <property type="project" value="UniProtKB"/>
</dbReference>
<dbReference type="GO" id="GO:0050885">
    <property type="term" value="P:neuromuscular process controlling balance"/>
    <property type="evidence" value="ECO:0000266"/>
    <property type="project" value="RGD"/>
</dbReference>
<dbReference type="GO" id="GO:0019228">
    <property type="term" value="P:neuronal action potential"/>
    <property type="evidence" value="ECO:0000266"/>
    <property type="project" value="RGD"/>
</dbReference>
<dbReference type="GO" id="GO:0007602">
    <property type="term" value="P:phototransduction"/>
    <property type="evidence" value="ECO:0000318"/>
    <property type="project" value="GO_Central"/>
</dbReference>
<dbReference type="FunFam" id="1.10.1220.70:FF:000001">
    <property type="entry name" value="Olfactory receptor"/>
    <property type="match status" value="1"/>
</dbReference>
<dbReference type="Gene3D" id="1.20.1070.10">
    <property type="entry name" value="Rhodopsin 7-helix transmembrane proteins"/>
    <property type="match status" value="1"/>
</dbReference>
<dbReference type="InterPro" id="IPR050125">
    <property type="entry name" value="GPCR_opsins"/>
</dbReference>
<dbReference type="InterPro" id="IPR000276">
    <property type="entry name" value="GPCR_Rhodpsn"/>
</dbReference>
<dbReference type="InterPro" id="IPR017452">
    <property type="entry name" value="GPCR_Rhodpsn_7TM"/>
</dbReference>
<dbReference type="PANTHER" id="PTHR24240">
    <property type="entry name" value="OPSIN"/>
    <property type="match status" value="1"/>
</dbReference>
<dbReference type="Pfam" id="PF00001">
    <property type="entry name" value="7tm_1"/>
    <property type="match status" value="1"/>
</dbReference>
<dbReference type="PRINTS" id="PR00237">
    <property type="entry name" value="GPCRRHODOPSN"/>
</dbReference>
<dbReference type="SUPFAM" id="SSF81321">
    <property type="entry name" value="Family A G protein-coupled receptor-like"/>
    <property type="match status" value="1"/>
</dbReference>
<dbReference type="PROSITE" id="PS50262">
    <property type="entry name" value="G_PROTEIN_RECEP_F1_2"/>
    <property type="match status" value="1"/>
</dbReference>
<reference key="1">
    <citation type="journal article" date="2000" name="Genomics">
        <title>A novel G-protein-coupled receptor gene expressed in striatum.</title>
        <authorList>
            <person name="Mizushima K."/>
            <person name="Miyamoto Y."/>
            <person name="Tsukahara F."/>
            <person name="Hirai M."/>
            <person name="Sakaki Y."/>
            <person name="Ito T."/>
        </authorList>
    </citation>
    <scope>NUCLEOTIDE SEQUENCE [MRNA]</scope>
    <scope>TISSUE SPECIFICITY</scope>
</reference>
<reference key="2">
    <citation type="journal article" date="2015" name="Mol. Psychiatry">
        <title>Local inactivation of Gpr88 in the nucleus accumbens attenuates behavioral deficits elicited by the neonatal administration of phencyclidine in rats.</title>
        <authorList>
            <person name="Ingallinesi M."/>
            <person name="Le Bouil L."/>
            <person name="Biguet N.F."/>
            <person name="Thi A.D."/>
            <person name="Mannoury la Cour C."/>
            <person name="Millan M.J."/>
            <person name="Ravassard P."/>
            <person name="Mallet J."/>
            <person name="Meloni R."/>
        </authorList>
    </citation>
    <scope>FUNCTION</scope>
</reference>
<reference key="3">
    <citation type="journal article" date="2016" name="J. Comp. Neurol.">
        <title>Developmental and adult expression patterns of the G-protein-coupled receptor GPR88 in the rat: Establishment of a dual nuclear-cytoplasmic localization.</title>
        <authorList>
            <person name="Massart R."/>
            <person name="Mignon V."/>
            <person name="Stanic J."/>
            <person name="Munoz-Tello P."/>
            <person name="Becker J.A."/>
            <person name="Kieffer B.L."/>
            <person name="Darmon M."/>
            <person name="Sokoloff P."/>
            <person name="Diaz J."/>
        </authorList>
    </citation>
    <scope>SUBCELLULAR LOCATION</scope>
    <scope>TISSUE SPECIFICITY</scope>
    <scope>DEVELOPMENTAL STAGE</scope>
</reference>
<accession>Q9ESP4</accession>